<dbReference type="EMBL" id="CP000606">
    <property type="protein sequence ID" value="ABO25345.1"/>
    <property type="molecule type" value="Genomic_DNA"/>
</dbReference>
<dbReference type="RefSeq" id="WP_007651290.1">
    <property type="nucleotide sequence ID" value="NC_009092.1"/>
</dbReference>
<dbReference type="SMR" id="A3QIP7"/>
<dbReference type="STRING" id="323850.Shew_3479"/>
<dbReference type="GeneID" id="67441923"/>
<dbReference type="KEGG" id="slo:Shew_3479"/>
<dbReference type="eggNOG" id="COG0267">
    <property type="taxonomic scope" value="Bacteria"/>
</dbReference>
<dbReference type="HOGENOM" id="CLU_190949_1_1_6"/>
<dbReference type="OrthoDB" id="21586at2"/>
<dbReference type="Proteomes" id="UP000001558">
    <property type="component" value="Chromosome"/>
</dbReference>
<dbReference type="GO" id="GO:0022625">
    <property type="term" value="C:cytosolic large ribosomal subunit"/>
    <property type="evidence" value="ECO:0007669"/>
    <property type="project" value="TreeGrafter"/>
</dbReference>
<dbReference type="GO" id="GO:0003735">
    <property type="term" value="F:structural constituent of ribosome"/>
    <property type="evidence" value="ECO:0007669"/>
    <property type="project" value="InterPro"/>
</dbReference>
<dbReference type="GO" id="GO:0006412">
    <property type="term" value="P:translation"/>
    <property type="evidence" value="ECO:0007669"/>
    <property type="project" value="UniProtKB-UniRule"/>
</dbReference>
<dbReference type="FunFam" id="2.20.28.120:FF:000001">
    <property type="entry name" value="50S ribosomal protein L33"/>
    <property type="match status" value="1"/>
</dbReference>
<dbReference type="Gene3D" id="2.20.28.120">
    <property type="entry name" value="Ribosomal protein L33"/>
    <property type="match status" value="1"/>
</dbReference>
<dbReference type="HAMAP" id="MF_00294">
    <property type="entry name" value="Ribosomal_bL33"/>
    <property type="match status" value="1"/>
</dbReference>
<dbReference type="InterPro" id="IPR001705">
    <property type="entry name" value="Ribosomal_bL33"/>
</dbReference>
<dbReference type="InterPro" id="IPR018264">
    <property type="entry name" value="Ribosomal_bL33_CS"/>
</dbReference>
<dbReference type="InterPro" id="IPR038584">
    <property type="entry name" value="Ribosomal_bL33_sf"/>
</dbReference>
<dbReference type="InterPro" id="IPR011332">
    <property type="entry name" value="Ribosomal_zn-bd"/>
</dbReference>
<dbReference type="NCBIfam" id="NF001860">
    <property type="entry name" value="PRK00595.1"/>
    <property type="match status" value="1"/>
</dbReference>
<dbReference type="NCBIfam" id="TIGR01023">
    <property type="entry name" value="rpmG_bact"/>
    <property type="match status" value="1"/>
</dbReference>
<dbReference type="PANTHER" id="PTHR15238">
    <property type="entry name" value="54S RIBOSOMAL PROTEIN L39, MITOCHONDRIAL"/>
    <property type="match status" value="1"/>
</dbReference>
<dbReference type="PANTHER" id="PTHR15238:SF1">
    <property type="entry name" value="LARGE RIBOSOMAL SUBUNIT PROTEIN BL33M"/>
    <property type="match status" value="1"/>
</dbReference>
<dbReference type="Pfam" id="PF00471">
    <property type="entry name" value="Ribosomal_L33"/>
    <property type="match status" value="1"/>
</dbReference>
<dbReference type="SUPFAM" id="SSF57829">
    <property type="entry name" value="Zn-binding ribosomal proteins"/>
    <property type="match status" value="1"/>
</dbReference>
<dbReference type="PROSITE" id="PS00582">
    <property type="entry name" value="RIBOSOMAL_L33"/>
    <property type="match status" value="1"/>
</dbReference>
<reference key="1">
    <citation type="submission" date="2007-03" db="EMBL/GenBank/DDBJ databases">
        <title>Complete sequence of Shewanella loihica PV-4.</title>
        <authorList>
            <consortium name="US DOE Joint Genome Institute"/>
            <person name="Copeland A."/>
            <person name="Lucas S."/>
            <person name="Lapidus A."/>
            <person name="Barry K."/>
            <person name="Detter J.C."/>
            <person name="Glavina del Rio T."/>
            <person name="Hammon N."/>
            <person name="Israni S."/>
            <person name="Dalin E."/>
            <person name="Tice H."/>
            <person name="Pitluck S."/>
            <person name="Chain P."/>
            <person name="Malfatti S."/>
            <person name="Shin M."/>
            <person name="Vergez L."/>
            <person name="Schmutz J."/>
            <person name="Larimer F."/>
            <person name="Land M."/>
            <person name="Hauser L."/>
            <person name="Kyrpides N."/>
            <person name="Mikhailova N."/>
            <person name="Romine M.F."/>
            <person name="Serres G."/>
            <person name="Fredrickson J."/>
            <person name="Tiedje J."/>
            <person name="Richardson P."/>
        </authorList>
    </citation>
    <scope>NUCLEOTIDE SEQUENCE [LARGE SCALE GENOMIC DNA]</scope>
    <source>
        <strain>ATCC BAA-1088 / PV-4</strain>
    </source>
</reference>
<proteinExistence type="inferred from homology"/>
<sequence>MAKAKGNREKIKLVSSAKTGHFYTTEKNKRNMPEKMEIKKFDPVIRQHVIYKEAKIK</sequence>
<accession>A3QIP7</accession>
<evidence type="ECO:0000255" key="1">
    <source>
        <dbReference type="HAMAP-Rule" id="MF_00294"/>
    </source>
</evidence>
<evidence type="ECO:0000305" key="2"/>
<name>RL33_SHELP</name>
<gene>
    <name evidence="1" type="primary">rpmG</name>
    <name type="ordered locus">Shew_3479</name>
</gene>
<keyword id="KW-1185">Reference proteome</keyword>
<keyword id="KW-0687">Ribonucleoprotein</keyword>
<keyword id="KW-0689">Ribosomal protein</keyword>
<protein>
    <recommendedName>
        <fullName evidence="1">Large ribosomal subunit protein bL33</fullName>
    </recommendedName>
    <alternativeName>
        <fullName evidence="2">50S ribosomal protein L33</fullName>
    </alternativeName>
</protein>
<comment type="similarity">
    <text evidence="1">Belongs to the bacterial ribosomal protein bL33 family.</text>
</comment>
<feature type="chain" id="PRO_0000356659" description="Large ribosomal subunit protein bL33">
    <location>
        <begin position="1"/>
        <end position="57"/>
    </location>
</feature>
<organism>
    <name type="scientific">Shewanella loihica (strain ATCC BAA-1088 / PV-4)</name>
    <dbReference type="NCBI Taxonomy" id="323850"/>
    <lineage>
        <taxon>Bacteria</taxon>
        <taxon>Pseudomonadati</taxon>
        <taxon>Pseudomonadota</taxon>
        <taxon>Gammaproteobacteria</taxon>
        <taxon>Alteromonadales</taxon>
        <taxon>Shewanellaceae</taxon>
        <taxon>Shewanella</taxon>
    </lineage>
</organism>